<protein>
    <recommendedName>
        <fullName evidence="1">Tryptophan synthase beta chain</fullName>
        <ecNumber evidence="1">4.2.1.20</ecNumber>
    </recommendedName>
</protein>
<proteinExistence type="inferred from homology"/>
<reference key="1">
    <citation type="journal article" date="2007" name="PLoS ONE">
        <title>Molecular correlates of host specialization in Staphylococcus aureus.</title>
        <authorList>
            <person name="Herron-Olson L."/>
            <person name="Fitzgerald J.R."/>
            <person name="Musser J.M."/>
            <person name="Kapur V."/>
        </authorList>
    </citation>
    <scope>NUCLEOTIDE SEQUENCE [LARGE SCALE GENOMIC DNA]</scope>
    <source>
        <strain>bovine RF122 / ET3-1</strain>
    </source>
</reference>
<evidence type="ECO:0000255" key="1">
    <source>
        <dbReference type="HAMAP-Rule" id="MF_00133"/>
    </source>
</evidence>
<accession>Q2YXX2</accession>
<dbReference type="EC" id="4.2.1.20" evidence="1"/>
<dbReference type="EMBL" id="AJ938182">
    <property type="protein sequence ID" value="CAI80916.1"/>
    <property type="molecule type" value="Genomic_DNA"/>
</dbReference>
<dbReference type="RefSeq" id="WP_001041359.1">
    <property type="nucleotide sequence ID" value="NC_007622.1"/>
</dbReference>
<dbReference type="SMR" id="Q2YXX2"/>
<dbReference type="KEGG" id="sab:SAB1227"/>
<dbReference type="HOGENOM" id="CLU_016734_3_1_9"/>
<dbReference type="UniPathway" id="UPA00035">
    <property type="reaction ID" value="UER00044"/>
</dbReference>
<dbReference type="GO" id="GO:0005737">
    <property type="term" value="C:cytoplasm"/>
    <property type="evidence" value="ECO:0007669"/>
    <property type="project" value="TreeGrafter"/>
</dbReference>
<dbReference type="GO" id="GO:0004834">
    <property type="term" value="F:tryptophan synthase activity"/>
    <property type="evidence" value="ECO:0007669"/>
    <property type="project" value="UniProtKB-UniRule"/>
</dbReference>
<dbReference type="CDD" id="cd06446">
    <property type="entry name" value="Trp-synth_B"/>
    <property type="match status" value="1"/>
</dbReference>
<dbReference type="FunFam" id="3.40.50.1100:FF:000001">
    <property type="entry name" value="Tryptophan synthase beta chain"/>
    <property type="match status" value="1"/>
</dbReference>
<dbReference type="FunFam" id="3.40.50.1100:FF:000004">
    <property type="entry name" value="Tryptophan synthase beta chain"/>
    <property type="match status" value="1"/>
</dbReference>
<dbReference type="Gene3D" id="3.40.50.1100">
    <property type="match status" value="2"/>
</dbReference>
<dbReference type="HAMAP" id="MF_00133">
    <property type="entry name" value="Trp_synth_beta"/>
    <property type="match status" value="1"/>
</dbReference>
<dbReference type="InterPro" id="IPR006653">
    <property type="entry name" value="Trp_synth_b_CS"/>
</dbReference>
<dbReference type="InterPro" id="IPR006654">
    <property type="entry name" value="Trp_synth_beta"/>
</dbReference>
<dbReference type="InterPro" id="IPR023026">
    <property type="entry name" value="Trp_synth_beta/beta-like"/>
</dbReference>
<dbReference type="InterPro" id="IPR001926">
    <property type="entry name" value="TrpB-like_PALP"/>
</dbReference>
<dbReference type="InterPro" id="IPR036052">
    <property type="entry name" value="TrpB-like_PALP_sf"/>
</dbReference>
<dbReference type="NCBIfam" id="TIGR00263">
    <property type="entry name" value="trpB"/>
    <property type="match status" value="1"/>
</dbReference>
<dbReference type="PANTHER" id="PTHR48077:SF3">
    <property type="entry name" value="TRYPTOPHAN SYNTHASE"/>
    <property type="match status" value="1"/>
</dbReference>
<dbReference type="PANTHER" id="PTHR48077">
    <property type="entry name" value="TRYPTOPHAN SYNTHASE-RELATED"/>
    <property type="match status" value="1"/>
</dbReference>
<dbReference type="Pfam" id="PF00291">
    <property type="entry name" value="PALP"/>
    <property type="match status" value="1"/>
</dbReference>
<dbReference type="PIRSF" id="PIRSF001413">
    <property type="entry name" value="Trp_syn_beta"/>
    <property type="match status" value="1"/>
</dbReference>
<dbReference type="SUPFAM" id="SSF53686">
    <property type="entry name" value="Tryptophan synthase beta subunit-like PLP-dependent enzymes"/>
    <property type="match status" value="1"/>
</dbReference>
<dbReference type="PROSITE" id="PS00168">
    <property type="entry name" value="TRP_SYNTHASE_BETA"/>
    <property type="match status" value="1"/>
</dbReference>
<organism>
    <name type="scientific">Staphylococcus aureus (strain bovine RF122 / ET3-1)</name>
    <dbReference type="NCBI Taxonomy" id="273036"/>
    <lineage>
        <taxon>Bacteria</taxon>
        <taxon>Bacillati</taxon>
        <taxon>Bacillota</taxon>
        <taxon>Bacilli</taxon>
        <taxon>Bacillales</taxon>
        <taxon>Staphylococcaceae</taxon>
        <taxon>Staphylococcus</taxon>
    </lineage>
</organism>
<keyword id="KW-0028">Amino-acid biosynthesis</keyword>
<keyword id="KW-0057">Aromatic amino acid biosynthesis</keyword>
<keyword id="KW-0456">Lyase</keyword>
<keyword id="KW-0663">Pyridoxal phosphate</keyword>
<keyword id="KW-0822">Tryptophan biosynthesis</keyword>
<feature type="chain" id="PRO_1000018407" description="Tryptophan synthase beta chain">
    <location>
        <begin position="1"/>
        <end position="404"/>
    </location>
</feature>
<feature type="modified residue" description="N6-(pyridoxal phosphate)lysine" evidence="1">
    <location>
        <position position="94"/>
    </location>
</feature>
<name>TRPB_STAAB</name>
<sequence>MNKQIQTEADELGFFGEYGGQYVPETLMPAIIELKKAYKEAKADPEFQRELEYYLSEYVGRTTPLTYAASYTESLGGAKIYLKREDLNHTGAHKINNALGQALLAKRMGKKKLVAETGAGQHGVASATVAALFDMELVVFMGSEDIKRQQLNVFRMELLGAKVVAVEDGQGTLSDAVNKALQYWVSHVDDTHYLLGSALGPDPFPTIVRDFQSVIGKEIKSQILKKEGRLPDAIVACIGGGSNAIGTFYPFIKDDVALYGVEAAGQGEDTDKHALAIGKGSPGVLHGTKMYLIQDEGGQVQLAHSISAGLDYPGIGPEHSYYHDIGRVTFENASDTQAMNALINFTKHEGTIPAIESAHALSYVERLAPTMSKEDIIVVTISGRGDKDMETIRQYMAERGLAND</sequence>
<gene>
    <name evidence="1" type="primary">trpB</name>
    <name type="ordered locus">SAB1227</name>
</gene>
<comment type="function">
    <text evidence="1">The beta subunit is responsible for the synthesis of L-tryptophan from indole and L-serine.</text>
</comment>
<comment type="catalytic activity">
    <reaction evidence="1">
        <text>(1S,2R)-1-C-(indol-3-yl)glycerol 3-phosphate + L-serine = D-glyceraldehyde 3-phosphate + L-tryptophan + H2O</text>
        <dbReference type="Rhea" id="RHEA:10532"/>
        <dbReference type="ChEBI" id="CHEBI:15377"/>
        <dbReference type="ChEBI" id="CHEBI:33384"/>
        <dbReference type="ChEBI" id="CHEBI:57912"/>
        <dbReference type="ChEBI" id="CHEBI:58866"/>
        <dbReference type="ChEBI" id="CHEBI:59776"/>
        <dbReference type="EC" id="4.2.1.20"/>
    </reaction>
</comment>
<comment type="cofactor">
    <cofactor evidence="1">
        <name>pyridoxal 5'-phosphate</name>
        <dbReference type="ChEBI" id="CHEBI:597326"/>
    </cofactor>
</comment>
<comment type="pathway">
    <text evidence="1">Amino-acid biosynthesis; L-tryptophan biosynthesis; L-tryptophan from chorismate: step 5/5.</text>
</comment>
<comment type="subunit">
    <text evidence="1">Tetramer of two alpha and two beta chains.</text>
</comment>
<comment type="similarity">
    <text evidence="1">Belongs to the TrpB family.</text>
</comment>